<protein>
    <recommendedName>
        <fullName evidence="1">Large ribosomal subunit protein bL12</fullName>
    </recommendedName>
    <alternativeName>
        <fullName evidence="2">50S ribosomal protein L7/L12</fullName>
    </alternativeName>
</protein>
<reference key="1">
    <citation type="journal article" date="1997" name="Nature">
        <title>The complete genome sequence of the gastric pathogen Helicobacter pylori.</title>
        <authorList>
            <person name="Tomb J.-F."/>
            <person name="White O."/>
            <person name="Kerlavage A.R."/>
            <person name="Clayton R.A."/>
            <person name="Sutton G.G."/>
            <person name="Fleischmann R.D."/>
            <person name="Ketchum K.A."/>
            <person name="Klenk H.-P."/>
            <person name="Gill S.R."/>
            <person name="Dougherty B.A."/>
            <person name="Nelson K.E."/>
            <person name="Quackenbush J."/>
            <person name="Zhou L."/>
            <person name="Kirkness E.F."/>
            <person name="Peterson S.N."/>
            <person name="Loftus B.J."/>
            <person name="Richardson D.L."/>
            <person name="Dodson R.J."/>
            <person name="Khalak H.G."/>
            <person name="Glodek A."/>
            <person name="McKenney K."/>
            <person name="FitzGerald L.M."/>
            <person name="Lee N."/>
            <person name="Adams M.D."/>
            <person name="Hickey E.K."/>
            <person name="Berg D.E."/>
            <person name="Gocayne J.D."/>
            <person name="Utterback T.R."/>
            <person name="Peterson J.D."/>
            <person name="Kelley J.M."/>
            <person name="Cotton M.D."/>
            <person name="Weidman J.F."/>
            <person name="Fujii C."/>
            <person name="Bowman C."/>
            <person name="Watthey L."/>
            <person name="Wallin E."/>
            <person name="Hayes W.S."/>
            <person name="Borodovsky M."/>
            <person name="Karp P.D."/>
            <person name="Smith H.O."/>
            <person name="Fraser C.M."/>
            <person name="Venter J.C."/>
        </authorList>
    </citation>
    <scope>NUCLEOTIDE SEQUENCE [LARGE SCALE GENOMIC DNA]</scope>
    <source>
        <strain>ATCC 700392 / 26695</strain>
    </source>
</reference>
<evidence type="ECO:0000255" key="1">
    <source>
        <dbReference type="HAMAP-Rule" id="MF_00368"/>
    </source>
</evidence>
<evidence type="ECO:0000305" key="2"/>
<organism>
    <name type="scientific">Helicobacter pylori (strain ATCC 700392 / 26695)</name>
    <name type="common">Campylobacter pylori</name>
    <dbReference type="NCBI Taxonomy" id="85962"/>
    <lineage>
        <taxon>Bacteria</taxon>
        <taxon>Pseudomonadati</taxon>
        <taxon>Campylobacterota</taxon>
        <taxon>Epsilonproteobacteria</taxon>
        <taxon>Campylobacterales</taxon>
        <taxon>Helicobacteraceae</taxon>
        <taxon>Helicobacter</taxon>
    </lineage>
</organism>
<sequence>MAISKEEVLEYIGSLSVLELSELVKMFEKKFGVSATPTVVAGAAVAGGAAAESEEKTEFNVILADSGAEKIKVIKVVREITGLGLKEAKDATEKTPHVLKEGVNKEEAETIKKKLEEVGAKVEVK</sequence>
<feature type="chain" id="PRO_0000157536" description="Large ribosomal subunit protein bL12">
    <location>
        <begin position="1"/>
        <end position="125"/>
    </location>
</feature>
<name>RL7_HELPY</name>
<accession>P55834</accession>
<proteinExistence type="evidence at protein level"/>
<keyword id="KW-1185">Reference proteome</keyword>
<keyword id="KW-0687">Ribonucleoprotein</keyword>
<keyword id="KW-0689">Ribosomal protein</keyword>
<gene>
    <name evidence="1" type="primary">rplL</name>
    <name type="ordered locus">HP_1199</name>
</gene>
<dbReference type="EMBL" id="AE000511">
    <property type="protein sequence ID" value="AAD08245.1"/>
    <property type="molecule type" value="Genomic_DNA"/>
</dbReference>
<dbReference type="PIR" id="G64669">
    <property type="entry name" value="G64669"/>
</dbReference>
<dbReference type="RefSeq" id="NP_207990.1">
    <property type="nucleotide sequence ID" value="NC_000915.1"/>
</dbReference>
<dbReference type="RefSeq" id="WP_001018245.1">
    <property type="nucleotide sequence ID" value="NC_018939.1"/>
</dbReference>
<dbReference type="SMR" id="P55834"/>
<dbReference type="DIP" id="DIP-3668N"/>
<dbReference type="FunCoup" id="P55834">
    <property type="interactions" value="425"/>
</dbReference>
<dbReference type="IntAct" id="P55834">
    <property type="interactions" value="2"/>
</dbReference>
<dbReference type="MINT" id="P55834"/>
<dbReference type="STRING" id="85962.HP_1199"/>
<dbReference type="PaxDb" id="85962-C694_06205"/>
<dbReference type="DNASU" id="899961"/>
<dbReference type="EnsemblBacteria" id="AAD08245">
    <property type="protein sequence ID" value="AAD08245"/>
    <property type="gene ID" value="HP_1199"/>
</dbReference>
<dbReference type="KEGG" id="heo:C694_06205"/>
<dbReference type="KEGG" id="hpy:HP_1199"/>
<dbReference type="PATRIC" id="fig|85962.47.peg.1289"/>
<dbReference type="eggNOG" id="COG0222">
    <property type="taxonomic scope" value="Bacteria"/>
</dbReference>
<dbReference type="InParanoid" id="P55834"/>
<dbReference type="OrthoDB" id="9811748at2"/>
<dbReference type="PhylomeDB" id="P55834"/>
<dbReference type="Proteomes" id="UP000000429">
    <property type="component" value="Chromosome"/>
</dbReference>
<dbReference type="GO" id="GO:0022625">
    <property type="term" value="C:cytosolic large ribosomal subunit"/>
    <property type="evidence" value="ECO:0000318"/>
    <property type="project" value="GO_Central"/>
</dbReference>
<dbReference type="GO" id="GO:0003729">
    <property type="term" value="F:mRNA binding"/>
    <property type="evidence" value="ECO:0000318"/>
    <property type="project" value="GO_Central"/>
</dbReference>
<dbReference type="GO" id="GO:0003735">
    <property type="term" value="F:structural constituent of ribosome"/>
    <property type="evidence" value="ECO:0000318"/>
    <property type="project" value="GO_Central"/>
</dbReference>
<dbReference type="GO" id="GO:0006412">
    <property type="term" value="P:translation"/>
    <property type="evidence" value="ECO:0000318"/>
    <property type="project" value="GO_Central"/>
</dbReference>
<dbReference type="CDD" id="cd00387">
    <property type="entry name" value="Ribosomal_L7_L12"/>
    <property type="match status" value="1"/>
</dbReference>
<dbReference type="FunFam" id="1.20.5.710:FF:000004">
    <property type="entry name" value="50S ribosomal protein L7/L12"/>
    <property type="match status" value="1"/>
</dbReference>
<dbReference type="FunFam" id="3.30.1390.10:FF:000001">
    <property type="entry name" value="50S ribosomal protein L7/L12"/>
    <property type="match status" value="1"/>
</dbReference>
<dbReference type="Gene3D" id="3.30.1390.10">
    <property type="match status" value="1"/>
</dbReference>
<dbReference type="Gene3D" id="1.20.5.710">
    <property type="entry name" value="Single helix bin"/>
    <property type="match status" value="1"/>
</dbReference>
<dbReference type="HAMAP" id="MF_00368">
    <property type="entry name" value="Ribosomal_bL12"/>
    <property type="match status" value="1"/>
</dbReference>
<dbReference type="InterPro" id="IPR000206">
    <property type="entry name" value="Ribosomal_bL12"/>
</dbReference>
<dbReference type="InterPro" id="IPR013823">
    <property type="entry name" value="Ribosomal_bL12_C"/>
</dbReference>
<dbReference type="InterPro" id="IPR014719">
    <property type="entry name" value="Ribosomal_bL12_C/ClpS-like"/>
</dbReference>
<dbReference type="InterPro" id="IPR008932">
    <property type="entry name" value="Ribosomal_bL12_oligo"/>
</dbReference>
<dbReference type="InterPro" id="IPR036235">
    <property type="entry name" value="Ribosomal_bL12_oligo_N_sf"/>
</dbReference>
<dbReference type="NCBIfam" id="TIGR00855">
    <property type="entry name" value="L12"/>
    <property type="match status" value="1"/>
</dbReference>
<dbReference type="PANTHER" id="PTHR45987">
    <property type="entry name" value="39S RIBOSOMAL PROTEIN L12"/>
    <property type="match status" value="1"/>
</dbReference>
<dbReference type="PANTHER" id="PTHR45987:SF4">
    <property type="entry name" value="LARGE RIBOSOMAL SUBUNIT PROTEIN BL12M"/>
    <property type="match status" value="1"/>
</dbReference>
<dbReference type="Pfam" id="PF00542">
    <property type="entry name" value="Ribosomal_L12"/>
    <property type="match status" value="1"/>
</dbReference>
<dbReference type="Pfam" id="PF16320">
    <property type="entry name" value="Ribosomal_L12_N"/>
    <property type="match status" value="1"/>
</dbReference>
<dbReference type="SUPFAM" id="SSF54736">
    <property type="entry name" value="ClpS-like"/>
    <property type="match status" value="1"/>
</dbReference>
<dbReference type="SUPFAM" id="SSF48300">
    <property type="entry name" value="Ribosomal protein L7/12, oligomerisation (N-terminal) domain"/>
    <property type="match status" value="1"/>
</dbReference>
<comment type="function">
    <text evidence="1">Forms part of the ribosomal stalk which helps the ribosome interact with GTP-bound translation factors. Is thus essential for accurate translation.</text>
</comment>
<comment type="subunit">
    <text evidence="1">Homodimer. Part of the ribosomal stalk of the 50S ribosomal subunit. Forms a multimeric L10(L12)X complex, where L10 forms an elongated spine to which 2 to 4 L12 dimers bind in a sequential fashion. Binds GTP-bound translation factors.</text>
</comment>
<comment type="interaction">
    <interactant intactId="EBI-7696366">
        <id>P55834</id>
    </interactant>
    <interactant intactId="EBI-7694828">
        <id>P56036</id>
        <label>rplJ</label>
    </interactant>
    <organismsDiffer>false</organismsDiffer>
    <experiments>3</experiments>
</comment>
<comment type="similarity">
    <text evidence="1">Belongs to the bacterial ribosomal protein bL12 family.</text>
</comment>